<gene>
    <name type="primary">CMPK</name>
    <name evidence="1" type="synonym">CMPK1</name>
    <name type="ORF">RCJMB04_11f2</name>
</gene>
<feature type="chain" id="PRO_0000292024" description="UMP-CMP kinase">
    <location>
        <begin position="1"/>
        <end position="196"/>
    </location>
</feature>
<feature type="region of interest" description="NMP" evidence="1">
    <location>
        <begin position="33"/>
        <end position="63"/>
    </location>
</feature>
<feature type="region of interest" description="LID" evidence="1">
    <location>
        <begin position="133"/>
        <end position="143"/>
    </location>
</feature>
<feature type="binding site" evidence="1">
    <location>
        <begin position="13"/>
        <end position="18"/>
    </location>
    <ligand>
        <name>ATP</name>
        <dbReference type="ChEBI" id="CHEBI:30616"/>
    </ligand>
</feature>
<feature type="binding site" evidence="1">
    <location>
        <position position="39"/>
    </location>
    <ligand>
        <name>a ribonucleoside 5'-phosphate</name>
        <dbReference type="ChEBI" id="CHEBI:58043"/>
    </ligand>
</feature>
<feature type="binding site" evidence="1">
    <location>
        <begin position="61"/>
        <end position="63"/>
    </location>
    <ligand>
        <name>a ribonucleoside 5'-phosphate</name>
        <dbReference type="ChEBI" id="CHEBI:58043"/>
    </ligand>
</feature>
<feature type="binding site" evidence="1">
    <location>
        <begin position="93"/>
        <end position="96"/>
    </location>
    <ligand>
        <name>a ribonucleoside 5'-phosphate</name>
        <dbReference type="ChEBI" id="CHEBI:58043"/>
    </ligand>
</feature>
<feature type="binding site" evidence="1">
    <location>
        <position position="100"/>
    </location>
    <ligand>
        <name>CMP</name>
        <dbReference type="ChEBI" id="CHEBI:60377"/>
    </ligand>
</feature>
<feature type="binding site" evidence="1">
    <location>
        <position position="134"/>
    </location>
    <ligand>
        <name>ATP</name>
        <dbReference type="ChEBI" id="CHEBI:30616"/>
    </ligand>
</feature>
<feature type="binding site" evidence="1">
    <location>
        <position position="140"/>
    </location>
    <ligand>
        <name>a ribonucleoside 5'-phosphate</name>
        <dbReference type="ChEBI" id="CHEBI:58043"/>
    </ligand>
</feature>
<feature type="binding site" evidence="1">
    <location>
        <position position="151"/>
    </location>
    <ligand>
        <name>a ribonucleoside 5'-phosphate</name>
        <dbReference type="ChEBI" id="CHEBI:58043"/>
    </ligand>
</feature>
<feature type="binding site" evidence="1">
    <location>
        <position position="179"/>
    </location>
    <ligand>
        <name>ATP</name>
        <dbReference type="ChEBI" id="CHEBI:30616"/>
    </ligand>
</feature>
<protein>
    <recommendedName>
        <fullName evidence="1">UMP-CMP kinase</fullName>
        <ecNumber evidence="1">2.7.4.14</ecNumber>
    </recommendedName>
    <alternativeName>
        <fullName evidence="1">Deoxycytidylate kinase</fullName>
        <shortName evidence="1">CK</shortName>
        <shortName evidence="1">dCMP kinase</shortName>
    </alternativeName>
    <alternativeName>
        <fullName evidence="1">Nucleoside-diphosphate kinase</fullName>
        <ecNumber evidence="1">2.7.4.6</ecNumber>
    </alternativeName>
    <alternativeName>
        <fullName evidence="1">Uridine monophosphate/cytidine monophosphate kinase</fullName>
        <shortName evidence="1">UMP/CMP kinase</shortName>
        <shortName evidence="1">UMP/CMPK</shortName>
    </alternativeName>
</protein>
<sequence length="196" mass="22172">MKPVVVFVLGGPGAGKGTQCARIVEKYGYTHLSAGDLLRDERKRPGSQYGELIENYIKEGEIVPVEITISLLKRAMDQTMAANSQKNKFLIDGFPRNEDNLQGWNKTMDGKADVSFVLFFDCDNEICIGRCLERGKSSGRSDDNRESLEKRIHTYLQSTRPIIDLYERMGKVRRVDASKSVDEVFEKVVQIFDKEG</sequence>
<reference key="1">
    <citation type="journal article" date="2005" name="Genome Biol.">
        <title>Full-length cDNAs from chicken bursal lymphocytes to facilitate gene function analysis.</title>
        <authorList>
            <person name="Caldwell R.B."/>
            <person name="Kierzek A.M."/>
            <person name="Arakawa H."/>
            <person name="Bezzubov Y."/>
            <person name="Zaim J."/>
            <person name="Fiedler P."/>
            <person name="Kutter S."/>
            <person name="Blagodatski A."/>
            <person name="Kostovska D."/>
            <person name="Koter M."/>
            <person name="Plachy J."/>
            <person name="Carninci P."/>
            <person name="Hayashizaki Y."/>
            <person name="Buerstedde J.-M."/>
        </authorList>
    </citation>
    <scope>NUCLEOTIDE SEQUENCE [LARGE SCALE MRNA]</scope>
    <source>
        <strain>CB</strain>
        <tissue>Bursa of Fabricius</tissue>
    </source>
</reference>
<organism>
    <name type="scientific">Gallus gallus</name>
    <name type="common">Chicken</name>
    <dbReference type="NCBI Taxonomy" id="9031"/>
    <lineage>
        <taxon>Eukaryota</taxon>
        <taxon>Metazoa</taxon>
        <taxon>Chordata</taxon>
        <taxon>Craniata</taxon>
        <taxon>Vertebrata</taxon>
        <taxon>Euteleostomi</taxon>
        <taxon>Archelosauria</taxon>
        <taxon>Archosauria</taxon>
        <taxon>Dinosauria</taxon>
        <taxon>Saurischia</taxon>
        <taxon>Theropoda</taxon>
        <taxon>Coelurosauria</taxon>
        <taxon>Aves</taxon>
        <taxon>Neognathae</taxon>
        <taxon>Galloanserae</taxon>
        <taxon>Galliformes</taxon>
        <taxon>Phasianidae</taxon>
        <taxon>Phasianinae</taxon>
        <taxon>Gallus</taxon>
    </lineage>
</organism>
<evidence type="ECO:0000255" key="1">
    <source>
        <dbReference type="HAMAP-Rule" id="MF_03172"/>
    </source>
</evidence>
<name>KCY_CHICK</name>
<accession>Q5ZKE7</accession>
<keyword id="KW-0067">ATP-binding</keyword>
<keyword id="KW-0963">Cytoplasm</keyword>
<keyword id="KW-0418">Kinase</keyword>
<keyword id="KW-0547">Nucleotide-binding</keyword>
<keyword id="KW-0539">Nucleus</keyword>
<keyword id="KW-0665">Pyrimidine biosynthesis</keyword>
<keyword id="KW-1185">Reference proteome</keyword>
<keyword id="KW-0808">Transferase</keyword>
<proteinExistence type="evidence at transcript level"/>
<comment type="function">
    <text evidence="1">Catalyzes the phosphorylation of pyrimidine nucleoside monophosphates at the expense of ATP. Plays an important role in de novo pyrimidine nucleotide biosynthesis. Has preference for UMP and CMP as phosphate acceptors. Also displays broad nucleoside diphosphate kinase activity.</text>
</comment>
<comment type="catalytic activity">
    <reaction evidence="1">
        <text>CMP + ATP = CDP + ADP</text>
        <dbReference type="Rhea" id="RHEA:11600"/>
        <dbReference type="ChEBI" id="CHEBI:30616"/>
        <dbReference type="ChEBI" id="CHEBI:58069"/>
        <dbReference type="ChEBI" id="CHEBI:60377"/>
        <dbReference type="ChEBI" id="CHEBI:456216"/>
        <dbReference type="EC" id="2.7.4.14"/>
    </reaction>
</comment>
<comment type="catalytic activity">
    <reaction evidence="1">
        <text>dCMP + ATP = dCDP + ADP</text>
        <dbReference type="Rhea" id="RHEA:25094"/>
        <dbReference type="ChEBI" id="CHEBI:30616"/>
        <dbReference type="ChEBI" id="CHEBI:57566"/>
        <dbReference type="ChEBI" id="CHEBI:58593"/>
        <dbReference type="ChEBI" id="CHEBI:456216"/>
        <dbReference type="EC" id="2.7.4.14"/>
    </reaction>
</comment>
<comment type="catalytic activity">
    <reaction evidence="1">
        <text>UMP + ATP = UDP + ADP</text>
        <dbReference type="Rhea" id="RHEA:24400"/>
        <dbReference type="ChEBI" id="CHEBI:30616"/>
        <dbReference type="ChEBI" id="CHEBI:57865"/>
        <dbReference type="ChEBI" id="CHEBI:58223"/>
        <dbReference type="ChEBI" id="CHEBI:456216"/>
        <dbReference type="EC" id="2.7.4.14"/>
    </reaction>
</comment>
<comment type="catalytic activity">
    <reaction evidence="1">
        <text>a 2'-deoxyribonucleoside 5'-diphosphate + ATP = a 2'-deoxyribonucleoside 5'-triphosphate + ADP</text>
        <dbReference type="Rhea" id="RHEA:44640"/>
        <dbReference type="ChEBI" id="CHEBI:30616"/>
        <dbReference type="ChEBI" id="CHEBI:61560"/>
        <dbReference type="ChEBI" id="CHEBI:73316"/>
        <dbReference type="ChEBI" id="CHEBI:456216"/>
        <dbReference type="EC" id="2.7.4.6"/>
    </reaction>
</comment>
<comment type="catalytic activity">
    <reaction evidence="1">
        <text>a ribonucleoside 5'-diphosphate + ATP = a ribonucleoside 5'-triphosphate + ADP</text>
        <dbReference type="Rhea" id="RHEA:18113"/>
        <dbReference type="ChEBI" id="CHEBI:30616"/>
        <dbReference type="ChEBI" id="CHEBI:57930"/>
        <dbReference type="ChEBI" id="CHEBI:61557"/>
        <dbReference type="ChEBI" id="CHEBI:456216"/>
        <dbReference type="EC" id="2.7.4.6"/>
    </reaction>
</comment>
<comment type="cofactor">
    <cofactor evidence="1">
        <name>Mg(2+)</name>
        <dbReference type="ChEBI" id="CHEBI:18420"/>
    </cofactor>
    <text evidence="1">Binds 1 Mg(2+) ion per monomer.</text>
</comment>
<comment type="subunit">
    <text evidence="1">Monomer.</text>
</comment>
<comment type="subcellular location">
    <subcellularLocation>
        <location evidence="1">Nucleus</location>
    </subcellularLocation>
    <subcellularLocation>
        <location evidence="1">Cytoplasm</location>
    </subcellularLocation>
    <text evidence="1">Predominantly nuclear.</text>
</comment>
<comment type="domain">
    <text evidence="1">Consists of three domains, a large central CORE domain and two small peripheral domains, NMPbind and LID, which undergo movements during catalysis. The LID domain closes over the site of phosphoryl transfer upon ATP binding. Assembling and dissambling the active center during each catalytic cycle provides an effective means to prevent ATP hydrolysis.</text>
</comment>
<comment type="similarity">
    <text evidence="1">Belongs to the adenylate kinase family. UMP-CMP kinase subfamily.</text>
</comment>
<dbReference type="EC" id="2.7.4.14" evidence="1"/>
<dbReference type="EC" id="2.7.4.6" evidence="1"/>
<dbReference type="EMBL" id="AJ720137">
    <property type="protein sequence ID" value="CAG31796.1"/>
    <property type="molecule type" value="mRNA"/>
</dbReference>
<dbReference type="RefSeq" id="NP_001026735.1">
    <property type="nucleotide sequence ID" value="NM_001031564.1"/>
</dbReference>
<dbReference type="SMR" id="Q5ZKE7"/>
<dbReference type="FunCoup" id="Q5ZKE7">
    <property type="interactions" value="2524"/>
</dbReference>
<dbReference type="STRING" id="9031.ENSGALP00000017049"/>
<dbReference type="PaxDb" id="9031-ENSGALP00000041616"/>
<dbReference type="GeneID" id="429100"/>
<dbReference type="KEGG" id="gga:429100"/>
<dbReference type="CTD" id="51727"/>
<dbReference type="VEuPathDB" id="HostDB:geneid_429100"/>
<dbReference type="eggNOG" id="KOG3079">
    <property type="taxonomic scope" value="Eukaryota"/>
</dbReference>
<dbReference type="InParanoid" id="Q5ZKE7"/>
<dbReference type="OMA" id="EQTMPVI"/>
<dbReference type="OrthoDB" id="442176at2759"/>
<dbReference type="PhylomeDB" id="Q5ZKE7"/>
<dbReference type="TreeFam" id="TF354283"/>
<dbReference type="Reactome" id="R-GGA-499943">
    <property type="pathway name" value="Interconversion of nucleotide di- and triphosphates"/>
</dbReference>
<dbReference type="PRO" id="PR:Q5ZKE7"/>
<dbReference type="Proteomes" id="UP000000539">
    <property type="component" value="Chromosome 8"/>
</dbReference>
<dbReference type="Bgee" id="ENSGALG00000010481">
    <property type="expression patterns" value="Expressed in colon and 14 other cell types or tissues"/>
</dbReference>
<dbReference type="GO" id="GO:0005737">
    <property type="term" value="C:cytoplasm"/>
    <property type="evidence" value="ECO:0000318"/>
    <property type="project" value="GO_Central"/>
</dbReference>
<dbReference type="GO" id="GO:0005634">
    <property type="term" value="C:nucleus"/>
    <property type="evidence" value="ECO:0000318"/>
    <property type="project" value="GO_Central"/>
</dbReference>
<dbReference type="GO" id="GO:0004127">
    <property type="term" value="F:(d)CMP kinase activity"/>
    <property type="evidence" value="ECO:0000318"/>
    <property type="project" value="GO_Central"/>
</dbReference>
<dbReference type="GO" id="GO:0005524">
    <property type="term" value="F:ATP binding"/>
    <property type="evidence" value="ECO:0007669"/>
    <property type="project" value="UniProtKB-KW"/>
</dbReference>
<dbReference type="GO" id="GO:0036430">
    <property type="term" value="F:CMP kinase activity"/>
    <property type="evidence" value="ECO:0007669"/>
    <property type="project" value="RHEA"/>
</dbReference>
<dbReference type="GO" id="GO:0036431">
    <property type="term" value="F:dCMP kinase activity"/>
    <property type="evidence" value="ECO:0007669"/>
    <property type="project" value="RHEA"/>
</dbReference>
<dbReference type="GO" id="GO:0004550">
    <property type="term" value="F:nucleoside diphosphate kinase activity"/>
    <property type="evidence" value="ECO:0000250"/>
    <property type="project" value="UniProtKB"/>
</dbReference>
<dbReference type="GO" id="GO:0033862">
    <property type="term" value="F:UMP kinase activity"/>
    <property type="evidence" value="ECO:0000318"/>
    <property type="project" value="GO_Central"/>
</dbReference>
<dbReference type="GO" id="GO:0006207">
    <property type="term" value="P:'de novo' pyrimidine nucleobase biosynthetic process"/>
    <property type="evidence" value="ECO:0007669"/>
    <property type="project" value="InterPro"/>
</dbReference>
<dbReference type="GO" id="GO:0046705">
    <property type="term" value="P:CDP biosynthetic process"/>
    <property type="evidence" value="ECO:0000318"/>
    <property type="project" value="GO_Central"/>
</dbReference>
<dbReference type="GO" id="GO:0006225">
    <property type="term" value="P:UDP biosynthetic process"/>
    <property type="evidence" value="ECO:0000318"/>
    <property type="project" value="GO_Central"/>
</dbReference>
<dbReference type="CDD" id="cd01428">
    <property type="entry name" value="ADK"/>
    <property type="match status" value="1"/>
</dbReference>
<dbReference type="FunFam" id="3.40.50.300:FF:000315">
    <property type="entry name" value="Adenylate kinase 1"/>
    <property type="match status" value="1"/>
</dbReference>
<dbReference type="Gene3D" id="3.40.50.300">
    <property type="entry name" value="P-loop containing nucleotide triphosphate hydrolases"/>
    <property type="match status" value="1"/>
</dbReference>
<dbReference type="HAMAP" id="MF_00235">
    <property type="entry name" value="Adenylate_kinase_Adk"/>
    <property type="match status" value="1"/>
</dbReference>
<dbReference type="HAMAP" id="MF_03172">
    <property type="entry name" value="Adenylate_kinase_UMP_CMP_kin"/>
    <property type="match status" value="1"/>
</dbReference>
<dbReference type="InterPro" id="IPR000850">
    <property type="entry name" value="Adenylat/UMP-CMP_kin"/>
</dbReference>
<dbReference type="InterPro" id="IPR033690">
    <property type="entry name" value="Adenylat_kinase_CS"/>
</dbReference>
<dbReference type="InterPro" id="IPR027417">
    <property type="entry name" value="P-loop_NTPase"/>
</dbReference>
<dbReference type="InterPro" id="IPR006266">
    <property type="entry name" value="UMP_CMP_kinase"/>
</dbReference>
<dbReference type="NCBIfam" id="TIGR01359">
    <property type="entry name" value="UMP_CMP_kin_fam"/>
    <property type="match status" value="1"/>
</dbReference>
<dbReference type="PANTHER" id="PTHR23359">
    <property type="entry name" value="NUCLEOTIDE KINASE"/>
    <property type="match status" value="1"/>
</dbReference>
<dbReference type="Pfam" id="PF00406">
    <property type="entry name" value="ADK"/>
    <property type="match status" value="1"/>
</dbReference>
<dbReference type="PRINTS" id="PR00094">
    <property type="entry name" value="ADENYLTKNASE"/>
</dbReference>
<dbReference type="SUPFAM" id="SSF52540">
    <property type="entry name" value="P-loop containing nucleoside triphosphate hydrolases"/>
    <property type="match status" value="1"/>
</dbReference>
<dbReference type="PROSITE" id="PS00113">
    <property type="entry name" value="ADENYLATE_KINASE"/>
    <property type="match status" value="1"/>
</dbReference>